<protein>
    <recommendedName>
        <fullName evidence="1">Aminomethyltransferase</fullName>
        <ecNumber evidence="1">2.1.2.10</ecNumber>
    </recommendedName>
    <alternativeName>
        <fullName evidence="1">Glycine cleavage system T protein</fullName>
    </alternativeName>
</protein>
<proteinExistence type="inferred from homology"/>
<sequence length="366" mass="40233">MITLQRTPLFDVYAKYGGKTIDFGGWELPVQFSSIKEEHEAVRTAAGLFDVSHMGEVEVKGVDSLAFLQRVVTNDVSTLKVGGAQYTAMCYENGGTVDDLLIYKRGEEDYLLVINASNIEKDYEWLASHVIGDATVVNVSSEVAQLAIQGPKAEGILQKVVSEDLKEIKFFKFKNDILVDGIPALVSRTGYTGEDGFEIYCKSEDAAKLWEKLLEVGAEEGLKPCGLGARDTLRFEATLPLYGQELSKDITPVEAGIGFAVKPNKEADFFGKATLKEQKENGAPRKLVGIEVIERGIPRTHYPVFIGEEKIGEVTSGTQSPTLKKSIGLALIDVKYAAVDTEVEIEIRNKRVKAVVVPTPFYKRSK</sequence>
<organism>
    <name type="scientific">Bacillus cereus (strain AH187)</name>
    <dbReference type="NCBI Taxonomy" id="405534"/>
    <lineage>
        <taxon>Bacteria</taxon>
        <taxon>Bacillati</taxon>
        <taxon>Bacillota</taxon>
        <taxon>Bacilli</taxon>
        <taxon>Bacillales</taxon>
        <taxon>Bacillaceae</taxon>
        <taxon>Bacillus</taxon>
        <taxon>Bacillus cereus group</taxon>
    </lineage>
</organism>
<gene>
    <name evidence="1" type="primary">gcvT</name>
    <name type="ordered locus">BCAH187_A4358</name>
</gene>
<keyword id="KW-0032">Aminotransferase</keyword>
<keyword id="KW-0808">Transferase</keyword>
<accession>B7HNZ1</accession>
<evidence type="ECO:0000255" key="1">
    <source>
        <dbReference type="HAMAP-Rule" id="MF_00259"/>
    </source>
</evidence>
<comment type="function">
    <text evidence="1">The glycine cleavage system catalyzes the degradation of glycine.</text>
</comment>
<comment type="catalytic activity">
    <reaction evidence="1">
        <text>N(6)-[(R)-S(8)-aminomethyldihydrolipoyl]-L-lysyl-[protein] + (6S)-5,6,7,8-tetrahydrofolate = N(6)-[(R)-dihydrolipoyl]-L-lysyl-[protein] + (6R)-5,10-methylene-5,6,7,8-tetrahydrofolate + NH4(+)</text>
        <dbReference type="Rhea" id="RHEA:16945"/>
        <dbReference type="Rhea" id="RHEA-COMP:10475"/>
        <dbReference type="Rhea" id="RHEA-COMP:10492"/>
        <dbReference type="ChEBI" id="CHEBI:15636"/>
        <dbReference type="ChEBI" id="CHEBI:28938"/>
        <dbReference type="ChEBI" id="CHEBI:57453"/>
        <dbReference type="ChEBI" id="CHEBI:83100"/>
        <dbReference type="ChEBI" id="CHEBI:83143"/>
        <dbReference type="EC" id="2.1.2.10"/>
    </reaction>
</comment>
<comment type="subunit">
    <text evidence="1">The glycine cleavage system is composed of four proteins: P, T, L and H.</text>
</comment>
<comment type="similarity">
    <text evidence="1">Belongs to the GcvT family.</text>
</comment>
<dbReference type="EC" id="2.1.2.10" evidence="1"/>
<dbReference type="EMBL" id="CP001177">
    <property type="protein sequence ID" value="ACJ79177.1"/>
    <property type="molecule type" value="Genomic_DNA"/>
</dbReference>
<dbReference type="SMR" id="B7HNZ1"/>
<dbReference type="KEGG" id="bcr:BCAH187_A4358"/>
<dbReference type="HOGENOM" id="CLU_007884_10_2_9"/>
<dbReference type="Proteomes" id="UP000002214">
    <property type="component" value="Chromosome"/>
</dbReference>
<dbReference type="GO" id="GO:0005829">
    <property type="term" value="C:cytosol"/>
    <property type="evidence" value="ECO:0007669"/>
    <property type="project" value="TreeGrafter"/>
</dbReference>
<dbReference type="GO" id="GO:0005960">
    <property type="term" value="C:glycine cleavage complex"/>
    <property type="evidence" value="ECO:0007669"/>
    <property type="project" value="InterPro"/>
</dbReference>
<dbReference type="GO" id="GO:0004047">
    <property type="term" value="F:aminomethyltransferase activity"/>
    <property type="evidence" value="ECO:0007669"/>
    <property type="project" value="UniProtKB-UniRule"/>
</dbReference>
<dbReference type="GO" id="GO:0008483">
    <property type="term" value="F:transaminase activity"/>
    <property type="evidence" value="ECO:0007669"/>
    <property type="project" value="UniProtKB-KW"/>
</dbReference>
<dbReference type="GO" id="GO:0019464">
    <property type="term" value="P:glycine decarboxylation via glycine cleavage system"/>
    <property type="evidence" value="ECO:0007669"/>
    <property type="project" value="UniProtKB-UniRule"/>
</dbReference>
<dbReference type="FunFam" id="2.40.30.110:FF:000003">
    <property type="entry name" value="Aminomethyltransferase"/>
    <property type="match status" value="1"/>
</dbReference>
<dbReference type="FunFam" id="3.30.70.1400:FF:000001">
    <property type="entry name" value="Aminomethyltransferase"/>
    <property type="match status" value="1"/>
</dbReference>
<dbReference type="FunFam" id="4.10.1250.10:FF:000001">
    <property type="entry name" value="Aminomethyltransferase"/>
    <property type="match status" value="1"/>
</dbReference>
<dbReference type="Gene3D" id="2.40.30.110">
    <property type="entry name" value="Aminomethyltransferase beta-barrel domains"/>
    <property type="match status" value="1"/>
</dbReference>
<dbReference type="Gene3D" id="3.30.70.1400">
    <property type="entry name" value="Aminomethyltransferase beta-barrel domains"/>
    <property type="match status" value="1"/>
</dbReference>
<dbReference type="Gene3D" id="4.10.1250.10">
    <property type="entry name" value="Aminomethyltransferase fragment"/>
    <property type="match status" value="1"/>
</dbReference>
<dbReference type="Gene3D" id="3.30.1360.120">
    <property type="entry name" value="Probable tRNA modification gtpase trme, domain 1"/>
    <property type="match status" value="1"/>
</dbReference>
<dbReference type="HAMAP" id="MF_00259">
    <property type="entry name" value="GcvT"/>
    <property type="match status" value="1"/>
</dbReference>
<dbReference type="InterPro" id="IPR006223">
    <property type="entry name" value="GCS_T"/>
</dbReference>
<dbReference type="InterPro" id="IPR022903">
    <property type="entry name" value="GCS_T_bac"/>
</dbReference>
<dbReference type="InterPro" id="IPR013977">
    <property type="entry name" value="GCST_C"/>
</dbReference>
<dbReference type="InterPro" id="IPR006222">
    <property type="entry name" value="GCV_T_N"/>
</dbReference>
<dbReference type="InterPro" id="IPR028896">
    <property type="entry name" value="GcvT/YgfZ/DmdA"/>
</dbReference>
<dbReference type="InterPro" id="IPR029043">
    <property type="entry name" value="GcvT/YgfZ_C"/>
</dbReference>
<dbReference type="InterPro" id="IPR027266">
    <property type="entry name" value="TrmE/GcvT_dom1"/>
</dbReference>
<dbReference type="NCBIfam" id="TIGR00528">
    <property type="entry name" value="gcvT"/>
    <property type="match status" value="1"/>
</dbReference>
<dbReference type="NCBIfam" id="NF001567">
    <property type="entry name" value="PRK00389.1"/>
    <property type="match status" value="1"/>
</dbReference>
<dbReference type="PANTHER" id="PTHR43757">
    <property type="entry name" value="AMINOMETHYLTRANSFERASE"/>
    <property type="match status" value="1"/>
</dbReference>
<dbReference type="PANTHER" id="PTHR43757:SF2">
    <property type="entry name" value="AMINOMETHYLTRANSFERASE, MITOCHONDRIAL"/>
    <property type="match status" value="1"/>
</dbReference>
<dbReference type="Pfam" id="PF01571">
    <property type="entry name" value="GCV_T"/>
    <property type="match status" value="1"/>
</dbReference>
<dbReference type="Pfam" id="PF08669">
    <property type="entry name" value="GCV_T_C"/>
    <property type="match status" value="1"/>
</dbReference>
<dbReference type="PIRSF" id="PIRSF006487">
    <property type="entry name" value="GcvT"/>
    <property type="match status" value="1"/>
</dbReference>
<dbReference type="SUPFAM" id="SSF101790">
    <property type="entry name" value="Aminomethyltransferase beta-barrel domain"/>
    <property type="match status" value="1"/>
</dbReference>
<dbReference type="SUPFAM" id="SSF103025">
    <property type="entry name" value="Folate-binding domain"/>
    <property type="match status" value="1"/>
</dbReference>
<reference key="1">
    <citation type="submission" date="2008-10" db="EMBL/GenBank/DDBJ databases">
        <title>Genome sequence of Bacillus cereus AH187.</title>
        <authorList>
            <person name="Dodson R.J."/>
            <person name="Durkin A.S."/>
            <person name="Rosovitz M.J."/>
            <person name="Rasko D.A."/>
            <person name="Kolsto A.B."/>
            <person name="Okstad O.A."/>
            <person name="Ravel J."/>
            <person name="Sutton G."/>
        </authorList>
    </citation>
    <scope>NUCLEOTIDE SEQUENCE [LARGE SCALE GENOMIC DNA]</scope>
    <source>
        <strain>AH187</strain>
    </source>
</reference>
<name>GCST_BACC7</name>
<feature type="chain" id="PRO_1000119196" description="Aminomethyltransferase">
    <location>
        <begin position="1"/>
        <end position="366"/>
    </location>
</feature>